<proteinExistence type="inferred from homology"/>
<reference key="1">
    <citation type="submission" date="2008-10" db="EMBL/GenBank/DDBJ databases">
        <title>Genome sequence of Clostridium botulinum A2 Kyoto.</title>
        <authorList>
            <person name="Shrivastava S."/>
            <person name="Brinkac L.M."/>
            <person name="Brown J.L."/>
            <person name="Bruce D."/>
            <person name="Detter C.C."/>
            <person name="Johnson E.A."/>
            <person name="Munk C.A."/>
            <person name="Smith L.A."/>
            <person name="Smith T.J."/>
            <person name="Sutton G."/>
            <person name="Brettin T.S."/>
        </authorList>
    </citation>
    <scope>NUCLEOTIDE SEQUENCE [LARGE SCALE GENOMIC DNA]</scope>
    <source>
        <strain>Kyoto / Type A2</strain>
    </source>
</reference>
<feature type="chain" id="PRO_1000191273" description="Cell division topological specificity factor">
    <location>
        <begin position="1"/>
        <end position="87"/>
    </location>
</feature>
<dbReference type="EMBL" id="CP001581">
    <property type="protein sequence ID" value="ACO86897.1"/>
    <property type="molecule type" value="Genomic_DNA"/>
</dbReference>
<dbReference type="RefSeq" id="WP_003358099.1">
    <property type="nucleotide sequence ID" value="NC_012563.1"/>
</dbReference>
<dbReference type="SMR" id="C1FVX5"/>
<dbReference type="GeneID" id="5187008"/>
<dbReference type="KEGG" id="cby:CLM_3392"/>
<dbReference type="eggNOG" id="COG0851">
    <property type="taxonomic scope" value="Bacteria"/>
</dbReference>
<dbReference type="HOGENOM" id="CLU_137929_1_0_9"/>
<dbReference type="Proteomes" id="UP000001374">
    <property type="component" value="Chromosome"/>
</dbReference>
<dbReference type="GO" id="GO:0051301">
    <property type="term" value="P:cell division"/>
    <property type="evidence" value="ECO:0007669"/>
    <property type="project" value="UniProtKB-KW"/>
</dbReference>
<dbReference type="GO" id="GO:0032955">
    <property type="term" value="P:regulation of division septum assembly"/>
    <property type="evidence" value="ECO:0007669"/>
    <property type="project" value="InterPro"/>
</dbReference>
<dbReference type="FunFam" id="3.30.1070.10:FF:000003">
    <property type="entry name" value="Cell division topological specificity factor"/>
    <property type="match status" value="1"/>
</dbReference>
<dbReference type="Gene3D" id="3.30.1070.10">
    <property type="entry name" value="Cell division topological specificity factor MinE"/>
    <property type="match status" value="1"/>
</dbReference>
<dbReference type="HAMAP" id="MF_00262">
    <property type="entry name" value="MinE"/>
    <property type="match status" value="1"/>
</dbReference>
<dbReference type="InterPro" id="IPR005527">
    <property type="entry name" value="MinE"/>
</dbReference>
<dbReference type="InterPro" id="IPR036707">
    <property type="entry name" value="MinE_sf"/>
</dbReference>
<dbReference type="NCBIfam" id="TIGR01215">
    <property type="entry name" value="minE"/>
    <property type="match status" value="1"/>
</dbReference>
<dbReference type="NCBIfam" id="NF001422">
    <property type="entry name" value="PRK00296.1"/>
    <property type="match status" value="1"/>
</dbReference>
<dbReference type="Pfam" id="PF03776">
    <property type="entry name" value="MinE"/>
    <property type="match status" value="1"/>
</dbReference>
<dbReference type="SUPFAM" id="SSF55229">
    <property type="entry name" value="Cell division protein MinE topological specificity domain"/>
    <property type="match status" value="1"/>
</dbReference>
<organism>
    <name type="scientific">Clostridium botulinum (strain Kyoto / Type A2)</name>
    <dbReference type="NCBI Taxonomy" id="536232"/>
    <lineage>
        <taxon>Bacteria</taxon>
        <taxon>Bacillati</taxon>
        <taxon>Bacillota</taxon>
        <taxon>Clostridia</taxon>
        <taxon>Eubacteriales</taxon>
        <taxon>Clostridiaceae</taxon>
        <taxon>Clostridium</taxon>
    </lineage>
</organism>
<comment type="function">
    <text evidence="1">Prevents the cell division inhibition by proteins MinC and MinD at internal division sites while permitting inhibition at polar sites. This ensures cell division at the proper site by restricting the formation of a division septum at the midpoint of the long axis of the cell.</text>
</comment>
<comment type="similarity">
    <text evidence="1">Belongs to the MinE family.</text>
</comment>
<gene>
    <name evidence="1" type="primary">minE</name>
    <name type="ordered locus">CLM_3392</name>
</gene>
<accession>C1FVX5</accession>
<keyword id="KW-0131">Cell cycle</keyword>
<keyword id="KW-0132">Cell division</keyword>
<name>MINE_CLOBJ</name>
<protein>
    <recommendedName>
        <fullName evidence="1">Cell division topological specificity factor</fullName>
    </recommendedName>
</protein>
<evidence type="ECO:0000255" key="1">
    <source>
        <dbReference type="HAMAP-Rule" id="MF_00262"/>
    </source>
</evidence>
<sequence>MDLFKFFSKQSSKDVAKERLKLILIQDRNSISPDVLESIREDMLKVISKYIEIDNEDVDIKMSSVEEIEGMSPALIASIPIKRIKKK</sequence>